<comment type="function">
    <text evidence="1">Histone methyltransferase that monomethylates 'Lys-5', 'Lys-8' and 'Lys-12' of histone H4 (H4K5me1, H4K8me1 and H4K12me1, respectively), thereby controlling gene expression and remodeling chromatin structures.</text>
</comment>
<comment type="catalytic activity">
    <reaction evidence="1">
        <text>L-lysyl-[histone] + S-adenosyl-L-methionine = N(6)-methyl-L-lysyl-[histone] + S-adenosyl-L-homocysteine + H(+)</text>
        <dbReference type="Rhea" id="RHEA:10024"/>
        <dbReference type="Rhea" id="RHEA-COMP:9845"/>
        <dbReference type="Rhea" id="RHEA-COMP:9846"/>
        <dbReference type="ChEBI" id="CHEBI:15378"/>
        <dbReference type="ChEBI" id="CHEBI:29969"/>
        <dbReference type="ChEBI" id="CHEBI:57856"/>
        <dbReference type="ChEBI" id="CHEBI:59789"/>
        <dbReference type="ChEBI" id="CHEBI:61929"/>
    </reaction>
    <physiologicalReaction direction="left-to-right" evidence="1">
        <dbReference type="Rhea" id="RHEA:10025"/>
    </physiologicalReaction>
</comment>
<comment type="subcellular location">
    <subcellularLocation>
        <location evidence="1">Nucleus</location>
    </subcellularLocation>
    <subcellularLocation>
        <location evidence="1">Chromosome</location>
    </subcellularLocation>
    <subcellularLocation>
        <location evidence="1">Cytoplasm</location>
    </subcellularLocation>
</comment>
<comment type="similarity">
    <text evidence="2">Belongs to the class V-like SAM-binding methyltransferase superfamily. Histone-lysine methyltransferase family. SET5 subfamily.</text>
</comment>
<keyword id="KW-0158">Chromosome</keyword>
<keyword id="KW-0963">Cytoplasm</keyword>
<keyword id="KW-0489">Methyltransferase</keyword>
<keyword id="KW-0539">Nucleus</keyword>
<keyword id="KW-1185">Reference proteome</keyword>
<keyword id="KW-0949">S-adenosyl-L-methionine</keyword>
<keyword id="KW-0808">Transferase</keyword>
<name>SET5_EREGS</name>
<gene>
    <name type="primary">SET5</name>
    <name type="ordered locus">ADL387C</name>
</gene>
<sequence length="488" mass="55715">MGQSSLKLETIPLNDCHFSDAAPVGSVIPTESEVYDAVAQLWRQEPELERAGWEEWRARLKAIHPGWSLSVAHICRTLEKHCMSITGITQFTYHELVTSKESPALREPHLAKVQVTWSEKGKGLVARRPLAKGELVFAEDALSFIPPLEKSTLVHLSKACGSCGTSLSQNRYYYVMNNLDCDNCTTIWCTKGCRNLDTTHDFLKHPMSRNKRCSAQKWLKFEQFCKENTWHSAYSVGVMFARYYLHSDRRLQGNFESLAEVSQRVRLHAADTMNSGAAFDLGVDLTANAQSVCMWEEGYGLFCDAFPLAKDEYDLDFEKFLRYVGKFNLNQVNGQIYMLLSHLNHSCEPNIYYELEGHHINVYARKEIKSDEELTVSYVNPLHDVDLRRRELRVNWGFLCLCDRCKREISKKNIDKAGHSSTTAGPEPQSYRGHRRKSSLRASKPTLQDLLENGKEFDIEIPSQPGFAARRASVRFDSKVVTAVEERQ</sequence>
<protein>
    <recommendedName>
        <fullName>Histone-lysine N-methyltransferase SET5</fullName>
        <ecNumber evidence="1">2.1.1.-</ecNumber>
    </recommendedName>
    <alternativeName>
        <fullName>SET domain-containing protein 5</fullName>
    </alternativeName>
</protein>
<evidence type="ECO:0000250" key="1">
    <source>
        <dbReference type="UniProtKB" id="P38890"/>
    </source>
</evidence>
<evidence type="ECO:0000255" key="2">
    <source>
        <dbReference type="PROSITE-ProRule" id="PRU00190"/>
    </source>
</evidence>
<evidence type="ECO:0000256" key="3">
    <source>
        <dbReference type="SAM" id="MobiDB-lite"/>
    </source>
</evidence>
<accession>Q75BF1</accession>
<dbReference type="EC" id="2.1.1.-" evidence="1"/>
<dbReference type="EMBL" id="AE016817">
    <property type="protein sequence ID" value="AAS51533.2"/>
    <property type="molecule type" value="Genomic_DNA"/>
</dbReference>
<dbReference type="RefSeq" id="NP_983709.2">
    <property type="nucleotide sequence ID" value="NM_209062.2"/>
</dbReference>
<dbReference type="FunCoup" id="Q75BF1">
    <property type="interactions" value="709"/>
</dbReference>
<dbReference type="STRING" id="284811.Q75BF1"/>
<dbReference type="EnsemblFungi" id="AAS51533">
    <property type="protein sequence ID" value="AAS51533"/>
    <property type="gene ID" value="AGOS_ADL387C"/>
</dbReference>
<dbReference type="GeneID" id="4619844"/>
<dbReference type="KEGG" id="ago:AGOS_ADL387C"/>
<dbReference type="eggNOG" id="KOG2084">
    <property type="taxonomic scope" value="Eukaryota"/>
</dbReference>
<dbReference type="HOGENOM" id="CLU_031650_0_0_1"/>
<dbReference type="InParanoid" id="Q75BF1"/>
<dbReference type="OMA" id="CEPNVRY"/>
<dbReference type="OrthoDB" id="438641at2759"/>
<dbReference type="Proteomes" id="UP000000591">
    <property type="component" value="Chromosome IV"/>
</dbReference>
<dbReference type="GO" id="GO:0000785">
    <property type="term" value="C:chromatin"/>
    <property type="evidence" value="ECO:0007669"/>
    <property type="project" value="EnsemblFungi"/>
</dbReference>
<dbReference type="GO" id="GO:0005737">
    <property type="term" value="C:cytoplasm"/>
    <property type="evidence" value="ECO:0007669"/>
    <property type="project" value="UniProtKB-SubCell"/>
</dbReference>
<dbReference type="GO" id="GO:0005634">
    <property type="term" value="C:nucleus"/>
    <property type="evidence" value="ECO:0000318"/>
    <property type="project" value="GO_Central"/>
</dbReference>
<dbReference type="GO" id="GO:0042054">
    <property type="term" value="F:histone methyltransferase activity"/>
    <property type="evidence" value="ECO:0007669"/>
    <property type="project" value="RHEA"/>
</dbReference>
<dbReference type="GO" id="GO:0008757">
    <property type="term" value="F:S-adenosylmethionine-dependent methyltransferase activity"/>
    <property type="evidence" value="ECO:0007669"/>
    <property type="project" value="EnsemblFungi"/>
</dbReference>
<dbReference type="GO" id="GO:0032259">
    <property type="term" value="P:methylation"/>
    <property type="evidence" value="ECO:0007669"/>
    <property type="project" value="UniProtKB-KW"/>
</dbReference>
<dbReference type="GO" id="GO:0000723">
    <property type="term" value="P:telomere maintenance"/>
    <property type="evidence" value="ECO:0007669"/>
    <property type="project" value="EnsemblFungi"/>
</dbReference>
<dbReference type="CDD" id="cd20071">
    <property type="entry name" value="SET_SMYD"/>
    <property type="match status" value="1"/>
</dbReference>
<dbReference type="Gene3D" id="1.10.220.160">
    <property type="match status" value="1"/>
</dbReference>
<dbReference type="Gene3D" id="6.10.140.2220">
    <property type="match status" value="1"/>
</dbReference>
<dbReference type="Gene3D" id="2.170.270.10">
    <property type="entry name" value="SET domain"/>
    <property type="match status" value="1"/>
</dbReference>
<dbReference type="InterPro" id="IPR001214">
    <property type="entry name" value="SET_dom"/>
</dbReference>
<dbReference type="InterPro" id="IPR046341">
    <property type="entry name" value="SET_dom_sf"/>
</dbReference>
<dbReference type="PANTHER" id="PTHR46402:SF2">
    <property type="entry name" value="HISTONE-LYSINE N-TRIMETHYLTRANSFERASE SMYD5"/>
    <property type="match status" value="1"/>
</dbReference>
<dbReference type="PANTHER" id="PTHR46402">
    <property type="entry name" value="SET AND MYND DOMAIN-CONTAINING PROTEIN 5"/>
    <property type="match status" value="1"/>
</dbReference>
<dbReference type="Pfam" id="PF00856">
    <property type="entry name" value="SET"/>
    <property type="match status" value="1"/>
</dbReference>
<dbReference type="SMART" id="SM00317">
    <property type="entry name" value="SET"/>
    <property type="match status" value="1"/>
</dbReference>
<dbReference type="SUPFAM" id="SSF82199">
    <property type="entry name" value="SET domain"/>
    <property type="match status" value="1"/>
</dbReference>
<dbReference type="PROSITE" id="PS50280">
    <property type="entry name" value="SET"/>
    <property type="match status" value="1"/>
</dbReference>
<feature type="chain" id="PRO_0000324464" description="Histone-lysine N-methyltransferase SET5">
    <location>
        <begin position="1"/>
        <end position="488"/>
    </location>
</feature>
<feature type="domain" description="SET" evidence="2">
    <location>
        <begin position="111"/>
        <end position="379"/>
    </location>
</feature>
<feature type="region of interest" description="Disordered" evidence="3">
    <location>
        <begin position="415"/>
        <end position="445"/>
    </location>
</feature>
<organism>
    <name type="scientific">Eremothecium gossypii (strain ATCC 10895 / CBS 109.51 / FGSC 9923 / NRRL Y-1056)</name>
    <name type="common">Yeast</name>
    <name type="synonym">Ashbya gossypii</name>
    <dbReference type="NCBI Taxonomy" id="284811"/>
    <lineage>
        <taxon>Eukaryota</taxon>
        <taxon>Fungi</taxon>
        <taxon>Dikarya</taxon>
        <taxon>Ascomycota</taxon>
        <taxon>Saccharomycotina</taxon>
        <taxon>Saccharomycetes</taxon>
        <taxon>Saccharomycetales</taxon>
        <taxon>Saccharomycetaceae</taxon>
        <taxon>Eremothecium</taxon>
    </lineage>
</organism>
<reference key="1">
    <citation type="journal article" date="2004" name="Science">
        <title>The Ashbya gossypii genome as a tool for mapping the ancient Saccharomyces cerevisiae genome.</title>
        <authorList>
            <person name="Dietrich F.S."/>
            <person name="Voegeli S."/>
            <person name="Brachat S."/>
            <person name="Lerch A."/>
            <person name="Gates K."/>
            <person name="Steiner S."/>
            <person name="Mohr C."/>
            <person name="Poehlmann R."/>
            <person name="Luedi P."/>
            <person name="Choi S."/>
            <person name="Wing R.A."/>
            <person name="Flavier A."/>
            <person name="Gaffney T.D."/>
            <person name="Philippsen P."/>
        </authorList>
    </citation>
    <scope>NUCLEOTIDE SEQUENCE [LARGE SCALE GENOMIC DNA]</scope>
    <source>
        <strain>ATCC 10895 / CBS 109.51 / FGSC 9923 / NRRL Y-1056</strain>
    </source>
</reference>
<reference key="2">
    <citation type="journal article" date="2013" name="G3 (Bethesda)">
        <title>Genomes of Ashbya fungi isolated from insects reveal four mating-type loci, numerous translocations, lack of transposons, and distinct gene duplications.</title>
        <authorList>
            <person name="Dietrich F.S."/>
            <person name="Voegeli S."/>
            <person name="Kuo S."/>
            <person name="Philippsen P."/>
        </authorList>
    </citation>
    <scope>GENOME REANNOTATION</scope>
    <scope>SEQUENCE REVISION TO 69-76</scope>
    <source>
        <strain>ATCC 10895 / CBS 109.51 / FGSC 9923 / NRRL Y-1056</strain>
    </source>
</reference>
<proteinExistence type="inferred from homology"/>